<organism>
    <name type="scientific">Arabidopsis thaliana</name>
    <name type="common">Mouse-ear cress</name>
    <dbReference type="NCBI Taxonomy" id="3702"/>
    <lineage>
        <taxon>Eukaryota</taxon>
        <taxon>Viridiplantae</taxon>
        <taxon>Streptophyta</taxon>
        <taxon>Embryophyta</taxon>
        <taxon>Tracheophyta</taxon>
        <taxon>Spermatophyta</taxon>
        <taxon>Magnoliopsida</taxon>
        <taxon>eudicotyledons</taxon>
        <taxon>Gunneridae</taxon>
        <taxon>Pentapetalae</taxon>
        <taxon>rosids</taxon>
        <taxon>malvids</taxon>
        <taxon>Brassicales</taxon>
        <taxon>Brassicaceae</taxon>
        <taxon>Camelineae</taxon>
        <taxon>Arabidopsis</taxon>
    </lineage>
</organism>
<feature type="transit peptide" description="Mitochondrion" evidence="2">
    <location>
        <begin position="1"/>
        <end position="33"/>
    </location>
</feature>
<feature type="chain" id="PRO_0000443386" description="Pterin-4-alpha-carbinolamine dehydratase 2, mitochondrial" evidence="2">
    <location>
        <begin position="34"/>
        <end position="187"/>
    </location>
</feature>
<feature type="sequence conflict" description="In Ref. 4; BAC41856 and 5; AAO39948." evidence="5" ref="4 5">
    <original>A</original>
    <variation>T</variation>
    <location>
        <position position="128"/>
    </location>
</feature>
<comment type="function">
    <text evidence="1 3">Involved in tetrahydrobiopterin biosynthesis (By similarity). Possesses pterin-4-alpha-carbinolamine dehydratase activity when expressed in a bacterial heterolgous system (PubMed:18245455).</text>
</comment>
<comment type="catalytic activity">
    <reaction evidence="6">
        <text>(4aS,6R)-4a-hydroxy-L-erythro-5,6,7,8-tetrahydrobiopterin = (6R)-L-erythro-6,7-dihydrobiopterin + H2O</text>
        <dbReference type="Rhea" id="RHEA:11920"/>
        <dbReference type="ChEBI" id="CHEBI:15377"/>
        <dbReference type="ChEBI" id="CHEBI:15642"/>
        <dbReference type="ChEBI" id="CHEBI:43120"/>
        <dbReference type="EC" id="4.2.1.96"/>
    </reaction>
</comment>
<comment type="subcellular location">
    <subcellularLocation>
        <location evidence="3">Mitochondrion</location>
    </subcellularLocation>
</comment>
<comment type="similarity">
    <text evidence="5">Belongs to the pterin-4-alpha-carbinolamine dehydratase family.</text>
</comment>
<proteinExistence type="evidence at protein level"/>
<reference key="1">
    <citation type="thesis" date="2002" institute="University of Queensland" country="Australia">
        <title>Functional characterisation of Arabidopsis DRGs: clues from the DRG2 interactor PDL1.</title>
        <authorList>
            <person name="Plume A.M."/>
        </authorList>
    </citation>
    <scope>NUCLEOTIDE SEQUENCE [MRNA]</scope>
</reference>
<reference key="2">
    <citation type="journal article" date="2000" name="Nature">
        <title>Sequence and analysis of chromosome 1 of the plant Arabidopsis thaliana.</title>
        <authorList>
            <person name="Theologis A."/>
            <person name="Ecker J.R."/>
            <person name="Palm C.J."/>
            <person name="Federspiel N.A."/>
            <person name="Kaul S."/>
            <person name="White O."/>
            <person name="Alonso J."/>
            <person name="Altafi H."/>
            <person name="Araujo R."/>
            <person name="Bowman C.L."/>
            <person name="Brooks S.Y."/>
            <person name="Buehler E."/>
            <person name="Chan A."/>
            <person name="Chao Q."/>
            <person name="Chen H."/>
            <person name="Cheuk R.F."/>
            <person name="Chin C.W."/>
            <person name="Chung M.K."/>
            <person name="Conn L."/>
            <person name="Conway A.B."/>
            <person name="Conway A.R."/>
            <person name="Creasy T.H."/>
            <person name="Dewar K."/>
            <person name="Dunn P."/>
            <person name="Etgu P."/>
            <person name="Feldblyum T.V."/>
            <person name="Feng J.-D."/>
            <person name="Fong B."/>
            <person name="Fujii C.Y."/>
            <person name="Gill J.E."/>
            <person name="Goldsmith A.D."/>
            <person name="Haas B."/>
            <person name="Hansen N.F."/>
            <person name="Hughes B."/>
            <person name="Huizar L."/>
            <person name="Hunter J.L."/>
            <person name="Jenkins J."/>
            <person name="Johnson-Hopson C."/>
            <person name="Khan S."/>
            <person name="Khaykin E."/>
            <person name="Kim C.J."/>
            <person name="Koo H.L."/>
            <person name="Kremenetskaia I."/>
            <person name="Kurtz D.B."/>
            <person name="Kwan A."/>
            <person name="Lam B."/>
            <person name="Langin-Hooper S."/>
            <person name="Lee A."/>
            <person name="Lee J.M."/>
            <person name="Lenz C.A."/>
            <person name="Li J.H."/>
            <person name="Li Y.-P."/>
            <person name="Lin X."/>
            <person name="Liu S.X."/>
            <person name="Liu Z.A."/>
            <person name="Luros J.S."/>
            <person name="Maiti R."/>
            <person name="Marziali A."/>
            <person name="Militscher J."/>
            <person name="Miranda M."/>
            <person name="Nguyen M."/>
            <person name="Nierman W.C."/>
            <person name="Osborne B.I."/>
            <person name="Pai G."/>
            <person name="Peterson J."/>
            <person name="Pham P.K."/>
            <person name="Rizzo M."/>
            <person name="Rooney T."/>
            <person name="Rowley D."/>
            <person name="Sakano H."/>
            <person name="Salzberg S.L."/>
            <person name="Schwartz J.R."/>
            <person name="Shinn P."/>
            <person name="Southwick A.M."/>
            <person name="Sun H."/>
            <person name="Tallon L.J."/>
            <person name="Tambunga G."/>
            <person name="Toriumi M.J."/>
            <person name="Town C.D."/>
            <person name="Utterback T."/>
            <person name="Van Aken S."/>
            <person name="Vaysberg M."/>
            <person name="Vysotskaia V.S."/>
            <person name="Walker M."/>
            <person name="Wu D."/>
            <person name="Yu G."/>
            <person name="Fraser C.M."/>
            <person name="Venter J.C."/>
            <person name="Davis R.W."/>
        </authorList>
    </citation>
    <scope>NUCLEOTIDE SEQUENCE [LARGE SCALE GENOMIC DNA]</scope>
    <source>
        <strain>cv. Columbia</strain>
    </source>
</reference>
<reference key="3">
    <citation type="journal article" date="2017" name="Plant J.">
        <title>Araport11: a complete reannotation of the Arabidopsis thaliana reference genome.</title>
        <authorList>
            <person name="Cheng C.Y."/>
            <person name="Krishnakumar V."/>
            <person name="Chan A.P."/>
            <person name="Thibaud-Nissen F."/>
            <person name="Schobel S."/>
            <person name="Town C.D."/>
        </authorList>
    </citation>
    <scope>GENOME REANNOTATION</scope>
    <source>
        <strain>cv. Columbia</strain>
    </source>
</reference>
<reference key="4">
    <citation type="journal article" date="2002" name="Science">
        <title>Functional annotation of a full-length Arabidopsis cDNA collection.</title>
        <authorList>
            <person name="Seki M."/>
            <person name="Narusaka M."/>
            <person name="Kamiya A."/>
            <person name="Ishida J."/>
            <person name="Satou M."/>
            <person name="Sakurai T."/>
            <person name="Nakajima M."/>
            <person name="Enju A."/>
            <person name="Akiyama K."/>
            <person name="Oono Y."/>
            <person name="Muramatsu M."/>
            <person name="Hayashizaki Y."/>
            <person name="Kawai J."/>
            <person name="Carninci P."/>
            <person name="Itoh M."/>
            <person name="Ishii Y."/>
            <person name="Arakawa T."/>
            <person name="Shibata K."/>
            <person name="Shinagawa A."/>
            <person name="Shinozaki K."/>
        </authorList>
    </citation>
    <scope>NUCLEOTIDE SEQUENCE [LARGE SCALE MRNA]</scope>
    <source>
        <strain>cv. Columbia</strain>
    </source>
</reference>
<reference key="5">
    <citation type="journal article" date="2003" name="Science">
        <title>Empirical analysis of transcriptional activity in the Arabidopsis genome.</title>
        <authorList>
            <person name="Yamada K."/>
            <person name="Lim J."/>
            <person name="Dale J.M."/>
            <person name="Chen H."/>
            <person name="Shinn P."/>
            <person name="Palm C.J."/>
            <person name="Southwick A.M."/>
            <person name="Wu H.C."/>
            <person name="Kim C.J."/>
            <person name="Nguyen M."/>
            <person name="Pham P.K."/>
            <person name="Cheuk R.F."/>
            <person name="Karlin-Newmann G."/>
            <person name="Liu S.X."/>
            <person name="Lam B."/>
            <person name="Sakano H."/>
            <person name="Wu T."/>
            <person name="Yu G."/>
            <person name="Miranda M."/>
            <person name="Quach H.L."/>
            <person name="Tripp M."/>
            <person name="Chang C.H."/>
            <person name="Lee J.M."/>
            <person name="Toriumi M.J."/>
            <person name="Chan M.M."/>
            <person name="Tang C.C."/>
            <person name="Onodera C.S."/>
            <person name="Deng J.M."/>
            <person name="Akiyama K."/>
            <person name="Ansari Y."/>
            <person name="Arakawa T."/>
            <person name="Banh J."/>
            <person name="Banno F."/>
            <person name="Bowser L."/>
            <person name="Brooks S.Y."/>
            <person name="Carninci P."/>
            <person name="Chao Q."/>
            <person name="Choy N."/>
            <person name="Enju A."/>
            <person name="Goldsmith A.D."/>
            <person name="Gurjal M."/>
            <person name="Hansen N.F."/>
            <person name="Hayashizaki Y."/>
            <person name="Johnson-Hopson C."/>
            <person name="Hsuan V.W."/>
            <person name="Iida K."/>
            <person name="Karnes M."/>
            <person name="Khan S."/>
            <person name="Koesema E."/>
            <person name="Ishida J."/>
            <person name="Jiang P.X."/>
            <person name="Jones T."/>
            <person name="Kawai J."/>
            <person name="Kamiya A."/>
            <person name="Meyers C."/>
            <person name="Nakajima M."/>
            <person name="Narusaka M."/>
            <person name="Seki M."/>
            <person name="Sakurai T."/>
            <person name="Satou M."/>
            <person name="Tamse R."/>
            <person name="Vaysberg M."/>
            <person name="Wallender E.K."/>
            <person name="Wong C."/>
            <person name="Yamamura Y."/>
            <person name="Yuan S."/>
            <person name="Shinozaki K."/>
            <person name="Davis R.W."/>
            <person name="Theologis A."/>
            <person name="Ecker J.R."/>
        </authorList>
    </citation>
    <scope>NUCLEOTIDE SEQUENCE [LARGE SCALE MRNA]</scope>
    <source>
        <strain>cv. Columbia</strain>
    </source>
</reference>
<reference key="6">
    <citation type="journal article" date="2008" name="Plant Physiol.">
        <title>Phylogenomic and functional analysis of pterin-4a-carbinolamine dehydratase family (COG2154) proteins in plants and microorganisms.</title>
        <authorList>
            <person name="Naponelli V."/>
            <person name="Noiriel A."/>
            <person name="Ziemak M.J."/>
            <person name="Beverley S.M."/>
            <person name="Lye L.F."/>
            <person name="Plume A.M."/>
            <person name="Botella J.R."/>
            <person name="Loizeau K."/>
            <person name="Ravanel S."/>
            <person name="Rebeille F."/>
            <person name="de Crecy-Lagard V."/>
            <person name="Hanson A.D."/>
        </authorList>
    </citation>
    <scope>FUNCTION</scope>
    <scope>CATALYTIC ACTIVITY</scope>
    <scope>SUBCELLULAR LOCATION</scope>
</reference>
<evidence type="ECO:0000250" key="1">
    <source>
        <dbReference type="UniProtKB" id="P61457"/>
    </source>
</evidence>
<evidence type="ECO:0000255" key="2"/>
<evidence type="ECO:0000269" key="3">
    <source>
    </source>
</evidence>
<evidence type="ECO:0000303" key="4">
    <source ref="1"/>
</evidence>
<evidence type="ECO:0000305" key="5"/>
<evidence type="ECO:0000305" key="6">
    <source>
    </source>
</evidence>
<evidence type="ECO:0000312" key="7">
    <source>
        <dbReference type="Araport" id="AT1G29810"/>
    </source>
</evidence>
<gene>
    <name evidence="4" type="primary">PDL2</name>
    <name evidence="7" type="ordered locus">At1g29810</name>
</gene>
<name>PDL2_ARATH</name>
<accession>Q6QJ72</accession>
<accession>Q8GZ70</accession>
<keyword id="KW-0456">Lyase</keyword>
<keyword id="KW-0496">Mitochondrion</keyword>
<keyword id="KW-1185">Reference proteome</keyword>
<keyword id="KW-0783">Tetrahydrobiopterin biosynthesis</keyword>
<keyword id="KW-0809">Transit peptide</keyword>
<dbReference type="EC" id="4.2.1.96" evidence="6"/>
<dbReference type="EMBL" id="AY536641">
    <property type="protein sequence ID" value="AAS45834.1"/>
    <property type="molecule type" value="mRNA"/>
</dbReference>
<dbReference type="EMBL" id="AC008030">
    <property type="status" value="NOT_ANNOTATED_CDS"/>
    <property type="molecule type" value="Genomic_DNA"/>
</dbReference>
<dbReference type="EMBL" id="CP002684">
    <property type="protein sequence ID" value="AEE31133.1"/>
    <property type="molecule type" value="Genomic_DNA"/>
</dbReference>
<dbReference type="EMBL" id="AK117179">
    <property type="protein sequence ID" value="BAC41856.1"/>
    <property type="molecule type" value="mRNA"/>
</dbReference>
<dbReference type="EMBL" id="BT003720">
    <property type="protein sequence ID" value="AAO39948.1"/>
    <property type="molecule type" value="mRNA"/>
</dbReference>
<dbReference type="RefSeq" id="NP_174274.2">
    <property type="nucleotide sequence ID" value="NM_102721.3"/>
</dbReference>
<dbReference type="SMR" id="Q6QJ72"/>
<dbReference type="FunCoup" id="Q6QJ72">
    <property type="interactions" value="133"/>
</dbReference>
<dbReference type="STRING" id="3702.Q6QJ72"/>
<dbReference type="MetOSite" id="Q6QJ72"/>
<dbReference type="PaxDb" id="3702-AT1G29810.1"/>
<dbReference type="EnsemblPlants" id="AT1G29810.1">
    <property type="protein sequence ID" value="AT1G29810.1"/>
    <property type="gene ID" value="AT1G29810"/>
</dbReference>
<dbReference type="GeneID" id="839859"/>
<dbReference type="Gramene" id="AT1G29810.1">
    <property type="protein sequence ID" value="AT1G29810.1"/>
    <property type="gene ID" value="AT1G29810"/>
</dbReference>
<dbReference type="KEGG" id="ath:AT1G29810"/>
<dbReference type="Araport" id="AT1G29810"/>
<dbReference type="TAIR" id="AT1G29810"/>
<dbReference type="eggNOG" id="KOG4073">
    <property type="taxonomic scope" value="Eukaryota"/>
</dbReference>
<dbReference type="HOGENOM" id="CLU_081974_0_0_1"/>
<dbReference type="InParanoid" id="Q6QJ72"/>
<dbReference type="PhylomeDB" id="Q6QJ72"/>
<dbReference type="PRO" id="PR:Q6QJ72"/>
<dbReference type="Proteomes" id="UP000006548">
    <property type="component" value="Chromosome 1"/>
</dbReference>
<dbReference type="ExpressionAtlas" id="Q6QJ72">
    <property type="expression patterns" value="baseline and differential"/>
</dbReference>
<dbReference type="GO" id="GO:0005739">
    <property type="term" value="C:mitochondrion"/>
    <property type="evidence" value="ECO:0000314"/>
    <property type="project" value="UniProtKB"/>
</dbReference>
<dbReference type="GO" id="GO:0008124">
    <property type="term" value="F:4-alpha-hydroxytetrahydrobiopterin dehydratase activity"/>
    <property type="evidence" value="ECO:0000314"/>
    <property type="project" value="UniProtKB"/>
</dbReference>
<dbReference type="GO" id="GO:0006729">
    <property type="term" value="P:tetrahydrobiopterin biosynthetic process"/>
    <property type="evidence" value="ECO:0007669"/>
    <property type="project" value="UniProtKB-KW"/>
</dbReference>
<dbReference type="CDD" id="cd00913">
    <property type="entry name" value="PCD_DCoH_subfamily_a"/>
    <property type="match status" value="1"/>
</dbReference>
<dbReference type="FunFam" id="3.30.1360.20:FF:000004">
    <property type="entry name" value="Transcriptional coactivator/pterin dehydratase"/>
    <property type="match status" value="1"/>
</dbReference>
<dbReference type="Gene3D" id="3.30.1360.20">
    <property type="entry name" value="Transcriptional coactivator/pterin dehydratase"/>
    <property type="match status" value="1"/>
</dbReference>
<dbReference type="InterPro" id="IPR036428">
    <property type="entry name" value="PCD_sf"/>
</dbReference>
<dbReference type="InterPro" id="IPR001533">
    <property type="entry name" value="Pterin_deHydtase"/>
</dbReference>
<dbReference type="PANTHER" id="PTHR12599">
    <property type="entry name" value="PTERIN-4-ALPHA-CARBINOLAMINE DEHYDRATASE"/>
    <property type="match status" value="1"/>
</dbReference>
<dbReference type="PANTHER" id="PTHR12599:SF0">
    <property type="entry name" value="PTERIN-4-ALPHA-CARBINOLAMINE DEHYDRATASE"/>
    <property type="match status" value="1"/>
</dbReference>
<dbReference type="Pfam" id="PF01329">
    <property type="entry name" value="Pterin_4a"/>
    <property type="match status" value="1"/>
</dbReference>
<dbReference type="SUPFAM" id="SSF55248">
    <property type="entry name" value="PCD-like"/>
    <property type="match status" value="1"/>
</dbReference>
<protein>
    <recommendedName>
        <fullName evidence="5">Pterin-4-alpha-carbinolamine dehydratase 2, mitochondrial</fullName>
        <ecNumber evidence="6">4.2.1.96</ecNumber>
    </recommendedName>
    <alternativeName>
        <fullName evidence="5">4-alpha-hydroxy-tetrahydropterin dehydratase</fullName>
    </alternativeName>
    <alternativeName>
        <fullName evidence="4">PCD/DCoH-like protein 2</fullName>
    </alternativeName>
</protein>
<sequence length="187" mass="21063">MSRLLLPKLFSISRTQVPAASLFNNLYRRHKRFVHWTSKMSTDSVRSSTTGGSASGARTFCSLADLSTKKCVPCNAKDLRAMTEQSAQDLLQKVAGWDLANDNDTLKLHRSWRVKSFTKGLDFFQRVADIAESEGHHPDLHLVGWNNVKIEIWTHAIGGLTENDFILAAKINELQVEDLLRKKKVAK</sequence>